<name>YG63_SCHPO</name>
<feature type="chain" id="PRO_0000317152" description="Uncharacterized Rab geranylgeranyltransferase C15C4.03">
    <location>
        <begin position="1"/>
        <end position="459"/>
    </location>
</feature>
<organism>
    <name type="scientific">Schizosaccharomyces pombe (strain 972 / ATCC 24843)</name>
    <name type="common">Fission yeast</name>
    <dbReference type="NCBI Taxonomy" id="284812"/>
    <lineage>
        <taxon>Eukaryota</taxon>
        <taxon>Fungi</taxon>
        <taxon>Dikarya</taxon>
        <taxon>Ascomycota</taxon>
        <taxon>Taphrinomycotina</taxon>
        <taxon>Schizosaccharomycetes</taxon>
        <taxon>Schizosaccharomycetales</taxon>
        <taxon>Schizosaccharomycetaceae</taxon>
        <taxon>Schizosaccharomyces</taxon>
    </lineage>
</organism>
<keyword id="KW-0963">Cytoplasm</keyword>
<keyword id="KW-0539">Nucleus</keyword>
<keyword id="KW-1185">Reference proteome</keyword>
<accession>O60112</accession>
<dbReference type="EMBL" id="CU329671">
    <property type="protein sequence ID" value="CAA18894.1"/>
    <property type="molecule type" value="Genomic_DNA"/>
</dbReference>
<dbReference type="PIR" id="T39473">
    <property type="entry name" value="T39473"/>
</dbReference>
<dbReference type="SMR" id="O60112"/>
<dbReference type="BioGRID" id="276170">
    <property type="interactions" value="1"/>
</dbReference>
<dbReference type="FunCoup" id="O60112">
    <property type="interactions" value="179"/>
</dbReference>
<dbReference type="STRING" id="284812.O60112"/>
<dbReference type="iPTMnet" id="O60112"/>
<dbReference type="PaxDb" id="4896-SPBC15C4.03.1"/>
<dbReference type="EnsemblFungi" id="SPBC15C4.03.1">
    <property type="protein sequence ID" value="SPBC15C4.03.1:pep"/>
    <property type="gene ID" value="SPBC15C4.03"/>
</dbReference>
<dbReference type="KEGG" id="spo:2539612"/>
<dbReference type="PomBase" id="SPBC15C4.03"/>
<dbReference type="VEuPathDB" id="FungiDB:SPBC15C4.03"/>
<dbReference type="eggNOG" id="KOG1439">
    <property type="taxonomic scope" value="Eukaryota"/>
</dbReference>
<dbReference type="HOGENOM" id="CLU_021695_3_1_1"/>
<dbReference type="InParanoid" id="O60112"/>
<dbReference type="OMA" id="HQYLEFQ"/>
<dbReference type="PhylomeDB" id="O60112"/>
<dbReference type="Reactome" id="R-SPO-6803205">
    <property type="pathway name" value="TP53 regulates transcription of several additional cell death genes whose specific roles in p53-dependent apoptosis remain uncertain"/>
</dbReference>
<dbReference type="Reactome" id="R-SPO-8873719">
    <property type="pathway name" value="RAB geranylgeranylation"/>
</dbReference>
<dbReference type="Reactome" id="R-SPO-8876198">
    <property type="pathway name" value="RAB GEFs exchange GTP for GDP on RABs"/>
</dbReference>
<dbReference type="PRO" id="PR:O60112"/>
<dbReference type="Proteomes" id="UP000002485">
    <property type="component" value="Chromosome II"/>
</dbReference>
<dbReference type="GO" id="GO:0005829">
    <property type="term" value="C:cytosol"/>
    <property type="evidence" value="ECO:0007005"/>
    <property type="project" value="PomBase"/>
</dbReference>
<dbReference type="GO" id="GO:0005634">
    <property type="term" value="C:nucleus"/>
    <property type="evidence" value="ECO:0007005"/>
    <property type="project" value="PomBase"/>
</dbReference>
<dbReference type="GO" id="GO:0005968">
    <property type="term" value="C:Rab-protein geranylgeranyltransferase complex"/>
    <property type="evidence" value="ECO:0000318"/>
    <property type="project" value="GO_Central"/>
</dbReference>
<dbReference type="GO" id="GO:0005092">
    <property type="term" value="F:GDP-dissociation inhibitor activity"/>
    <property type="evidence" value="ECO:0000255"/>
    <property type="project" value="PomBase"/>
</dbReference>
<dbReference type="GO" id="GO:0007264">
    <property type="term" value="P:small GTPase-mediated signal transduction"/>
    <property type="evidence" value="ECO:0007669"/>
    <property type="project" value="InterPro"/>
</dbReference>
<dbReference type="GO" id="GO:0016192">
    <property type="term" value="P:vesicle-mediated transport"/>
    <property type="evidence" value="ECO:0000318"/>
    <property type="project" value="GO_Central"/>
</dbReference>
<dbReference type="FunFam" id="1.10.405.10:FF:000003">
    <property type="entry name" value="Rab proteins geranylgeranyltransferase component A"/>
    <property type="match status" value="1"/>
</dbReference>
<dbReference type="Gene3D" id="3.50.50.60">
    <property type="entry name" value="FAD/NAD(P)-binding domain"/>
    <property type="match status" value="1"/>
</dbReference>
<dbReference type="Gene3D" id="1.10.405.10">
    <property type="entry name" value="Guanine Nucleotide Dissociation Inhibitor, domain 1"/>
    <property type="match status" value="1"/>
</dbReference>
<dbReference type="Gene3D" id="3.30.519.10">
    <property type="entry name" value="Guanine Nucleotide Dissociation Inhibitor, domain 2"/>
    <property type="match status" value="1"/>
</dbReference>
<dbReference type="InterPro" id="IPR036188">
    <property type="entry name" value="FAD/NAD-bd_sf"/>
</dbReference>
<dbReference type="InterPro" id="IPR018203">
    <property type="entry name" value="GDP_dissociation_inhibitor"/>
</dbReference>
<dbReference type="InterPro" id="IPR017230">
    <property type="entry name" value="Mrs6"/>
</dbReference>
<dbReference type="PANTHER" id="PTHR11787:SF4">
    <property type="entry name" value="CHM, RAB ESCORT PROTEIN 1"/>
    <property type="match status" value="1"/>
</dbReference>
<dbReference type="PANTHER" id="PTHR11787">
    <property type="entry name" value="RAB GDP-DISSOCIATION INHIBITOR"/>
    <property type="match status" value="1"/>
</dbReference>
<dbReference type="Pfam" id="PF00996">
    <property type="entry name" value="GDI"/>
    <property type="match status" value="1"/>
</dbReference>
<dbReference type="PIRSF" id="PIRSF037514">
    <property type="entry name" value="Rab_ger_ger_transf_A_fun"/>
    <property type="match status" value="1"/>
</dbReference>
<dbReference type="PRINTS" id="PR00891">
    <property type="entry name" value="RABGDIREP"/>
</dbReference>
<dbReference type="PRINTS" id="PR00894">
    <property type="entry name" value="YEASTMRS6P"/>
</dbReference>
<dbReference type="SUPFAM" id="SSF51905">
    <property type="entry name" value="FAD/NAD(P)-binding domain"/>
    <property type="match status" value="1"/>
</dbReference>
<protein>
    <recommendedName>
        <fullName>Uncharacterized Rab geranylgeranyltransferase C15C4.03</fullName>
    </recommendedName>
</protein>
<evidence type="ECO:0000269" key="1">
    <source>
    </source>
</evidence>
<evidence type="ECO:0000305" key="2"/>
<proteinExistence type="inferred from homology"/>
<gene>
    <name type="ORF">SPBC15C4.03</name>
</gene>
<reference key="1">
    <citation type="journal article" date="2002" name="Nature">
        <title>The genome sequence of Schizosaccharomyces pombe.</title>
        <authorList>
            <person name="Wood V."/>
            <person name="Gwilliam R."/>
            <person name="Rajandream M.A."/>
            <person name="Lyne M.H."/>
            <person name="Lyne R."/>
            <person name="Stewart A."/>
            <person name="Sgouros J.G."/>
            <person name="Peat N."/>
            <person name="Hayles J."/>
            <person name="Baker S.G."/>
            <person name="Basham D."/>
            <person name="Bowman S."/>
            <person name="Brooks K."/>
            <person name="Brown D."/>
            <person name="Brown S."/>
            <person name="Chillingworth T."/>
            <person name="Churcher C.M."/>
            <person name="Collins M."/>
            <person name="Connor R."/>
            <person name="Cronin A."/>
            <person name="Davis P."/>
            <person name="Feltwell T."/>
            <person name="Fraser A."/>
            <person name="Gentles S."/>
            <person name="Goble A."/>
            <person name="Hamlin N."/>
            <person name="Harris D.E."/>
            <person name="Hidalgo J."/>
            <person name="Hodgson G."/>
            <person name="Holroyd S."/>
            <person name="Hornsby T."/>
            <person name="Howarth S."/>
            <person name="Huckle E.J."/>
            <person name="Hunt S."/>
            <person name="Jagels K."/>
            <person name="James K.D."/>
            <person name="Jones L."/>
            <person name="Jones M."/>
            <person name="Leather S."/>
            <person name="McDonald S."/>
            <person name="McLean J."/>
            <person name="Mooney P."/>
            <person name="Moule S."/>
            <person name="Mungall K.L."/>
            <person name="Murphy L.D."/>
            <person name="Niblett D."/>
            <person name="Odell C."/>
            <person name="Oliver K."/>
            <person name="O'Neil S."/>
            <person name="Pearson D."/>
            <person name="Quail M.A."/>
            <person name="Rabbinowitsch E."/>
            <person name="Rutherford K.M."/>
            <person name="Rutter S."/>
            <person name="Saunders D."/>
            <person name="Seeger K."/>
            <person name="Sharp S."/>
            <person name="Skelton J."/>
            <person name="Simmonds M.N."/>
            <person name="Squares R."/>
            <person name="Squares S."/>
            <person name="Stevens K."/>
            <person name="Taylor K."/>
            <person name="Taylor R.G."/>
            <person name="Tivey A."/>
            <person name="Walsh S.V."/>
            <person name="Warren T."/>
            <person name="Whitehead S."/>
            <person name="Woodward J.R."/>
            <person name="Volckaert G."/>
            <person name="Aert R."/>
            <person name="Robben J."/>
            <person name="Grymonprez B."/>
            <person name="Weltjens I."/>
            <person name="Vanstreels E."/>
            <person name="Rieger M."/>
            <person name="Schaefer M."/>
            <person name="Mueller-Auer S."/>
            <person name="Gabel C."/>
            <person name="Fuchs M."/>
            <person name="Duesterhoeft A."/>
            <person name="Fritzc C."/>
            <person name="Holzer E."/>
            <person name="Moestl D."/>
            <person name="Hilbert H."/>
            <person name="Borzym K."/>
            <person name="Langer I."/>
            <person name="Beck A."/>
            <person name="Lehrach H."/>
            <person name="Reinhardt R."/>
            <person name="Pohl T.M."/>
            <person name="Eger P."/>
            <person name="Zimmermann W."/>
            <person name="Wedler H."/>
            <person name="Wambutt R."/>
            <person name="Purnelle B."/>
            <person name="Goffeau A."/>
            <person name="Cadieu E."/>
            <person name="Dreano S."/>
            <person name="Gloux S."/>
            <person name="Lelaure V."/>
            <person name="Mottier S."/>
            <person name="Galibert F."/>
            <person name="Aves S.J."/>
            <person name="Xiang Z."/>
            <person name="Hunt C."/>
            <person name="Moore K."/>
            <person name="Hurst S.M."/>
            <person name="Lucas M."/>
            <person name="Rochet M."/>
            <person name="Gaillardin C."/>
            <person name="Tallada V.A."/>
            <person name="Garzon A."/>
            <person name="Thode G."/>
            <person name="Daga R.R."/>
            <person name="Cruzado L."/>
            <person name="Jimenez J."/>
            <person name="Sanchez M."/>
            <person name="del Rey F."/>
            <person name="Benito J."/>
            <person name="Dominguez A."/>
            <person name="Revuelta J.L."/>
            <person name="Moreno S."/>
            <person name="Armstrong J."/>
            <person name="Forsburg S.L."/>
            <person name="Cerutti L."/>
            <person name="Lowe T."/>
            <person name="McCombie W.R."/>
            <person name="Paulsen I."/>
            <person name="Potashkin J."/>
            <person name="Shpakovski G.V."/>
            <person name="Ussery D."/>
            <person name="Barrell B.G."/>
            <person name="Nurse P."/>
        </authorList>
    </citation>
    <scope>NUCLEOTIDE SEQUENCE [LARGE SCALE GENOMIC DNA]</scope>
    <source>
        <strain>972 / ATCC 24843</strain>
    </source>
</reference>
<reference key="2">
    <citation type="journal article" date="2006" name="Nat. Biotechnol.">
        <title>ORFeome cloning and global analysis of protein localization in the fission yeast Schizosaccharomyces pombe.</title>
        <authorList>
            <person name="Matsuyama A."/>
            <person name="Arai R."/>
            <person name="Yashiroda Y."/>
            <person name="Shirai A."/>
            <person name="Kamata A."/>
            <person name="Sekido S."/>
            <person name="Kobayashi Y."/>
            <person name="Hashimoto A."/>
            <person name="Hamamoto M."/>
            <person name="Hiraoka Y."/>
            <person name="Horinouchi S."/>
            <person name="Yoshida M."/>
        </authorList>
    </citation>
    <scope>SUBCELLULAR LOCATION [LARGE SCALE ANALYSIS]</scope>
</reference>
<sequence>MDDPNSYDVIIVGTNLRNSILSAALSWANQRVLHIDENSFYGEIDGSLTLRDLEQINEKIKKVDSSQILNDNGSHKSPLKRFEVQFLNKDLIPKNKGSVIQFHPQEIFASSELVKLLSETKIYKYLLLKPARSFRLLTSNEEWIKVPESRADIFNNKNLSLASKRIVMRFMKFVSNIADEQNQNLVKEWESKPFYKFLEEVFQLSGAIEESIIYGLCQSLSKDIPTKDALDTVLKYFHSFGMYGDYSYLLAMYGTGSELCQGFCRSSAVMGGTFMLGQAIDKIDESKIVLKDGSTLSAKKIVSSVDEGKLPHQQIQQRYLLVKGDCQQLFQEDGFFAALDASLIHFSPFSISENFGNSVQAKLYGSGSGDCPEGYCIWYLKTLNDSPCNEVFNLATKKLCSFSGCDDLEIIVQVDETLNQLRHIDYDDTLHSAKSLFYEILGQNNTFLQREGLFDEDDE</sequence>
<comment type="subcellular location">
    <subcellularLocation>
        <location evidence="1">Cytoplasm</location>
    </subcellularLocation>
    <subcellularLocation>
        <location evidence="1">Nucleus</location>
    </subcellularLocation>
</comment>
<comment type="similarity">
    <text evidence="2">Belongs to the Rab GDI family.</text>
</comment>